<proteinExistence type="inferred from homology"/>
<protein>
    <recommendedName>
        <fullName evidence="1">S-adenosylmethionine synthase</fullName>
        <shortName evidence="1">AdoMet synthase</shortName>
        <ecNumber evidence="1">2.5.1.6</ecNumber>
    </recommendedName>
    <alternativeName>
        <fullName evidence="1">MAT</fullName>
    </alternativeName>
    <alternativeName>
        <fullName evidence="1">Methionine adenosyltransferase</fullName>
    </alternativeName>
</protein>
<name>METK_SALAR</name>
<reference key="1">
    <citation type="submission" date="2007-11" db="EMBL/GenBank/DDBJ databases">
        <authorList>
            <consortium name="The Salmonella enterica serovar Arizonae Genome Sequencing Project"/>
            <person name="McClelland M."/>
            <person name="Sanderson E.K."/>
            <person name="Porwollik S."/>
            <person name="Spieth J."/>
            <person name="Clifton W.S."/>
            <person name="Fulton R."/>
            <person name="Chunyan W."/>
            <person name="Wollam A."/>
            <person name="Shah N."/>
            <person name="Pepin K."/>
            <person name="Bhonagiri V."/>
            <person name="Nash W."/>
            <person name="Johnson M."/>
            <person name="Thiruvilangam P."/>
            <person name="Wilson R."/>
        </authorList>
    </citation>
    <scope>NUCLEOTIDE SEQUENCE [LARGE SCALE GENOMIC DNA]</scope>
    <source>
        <strain>ATCC BAA-731 / CDC346-86 / RSK2980</strain>
    </source>
</reference>
<feature type="chain" id="PRO_1000075390" description="S-adenosylmethionine synthase">
    <location>
        <begin position="1"/>
        <end position="384"/>
    </location>
</feature>
<feature type="region of interest" description="Flexible loop" evidence="1">
    <location>
        <begin position="99"/>
        <end position="109"/>
    </location>
</feature>
<feature type="binding site" description="in other chain" evidence="1">
    <location>
        <position position="15"/>
    </location>
    <ligand>
        <name>ATP</name>
        <dbReference type="ChEBI" id="CHEBI:30616"/>
        <note>ligand shared between two neighboring subunits</note>
    </ligand>
</feature>
<feature type="binding site" evidence="1">
    <location>
        <position position="17"/>
    </location>
    <ligand>
        <name>Mg(2+)</name>
        <dbReference type="ChEBI" id="CHEBI:18420"/>
    </ligand>
</feature>
<feature type="binding site" evidence="1">
    <location>
        <position position="43"/>
    </location>
    <ligand>
        <name>K(+)</name>
        <dbReference type="ChEBI" id="CHEBI:29103"/>
    </ligand>
</feature>
<feature type="binding site" description="in other chain" evidence="1">
    <location>
        <position position="56"/>
    </location>
    <ligand>
        <name>L-methionine</name>
        <dbReference type="ChEBI" id="CHEBI:57844"/>
        <note>ligand shared between two neighboring subunits</note>
    </ligand>
</feature>
<feature type="binding site" description="in other chain" evidence="1">
    <location>
        <position position="99"/>
    </location>
    <ligand>
        <name>L-methionine</name>
        <dbReference type="ChEBI" id="CHEBI:57844"/>
        <note>ligand shared between two neighboring subunits</note>
    </ligand>
</feature>
<feature type="binding site" description="in other chain" evidence="1">
    <location>
        <begin position="164"/>
        <end position="166"/>
    </location>
    <ligand>
        <name>ATP</name>
        <dbReference type="ChEBI" id="CHEBI:30616"/>
        <note>ligand shared between two neighboring subunits</note>
    </ligand>
</feature>
<feature type="binding site" description="in other chain" evidence="1">
    <location>
        <begin position="230"/>
        <end position="231"/>
    </location>
    <ligand>
        <name>ATP</name>
        <dbReference type="ChEBI" id="CHEBI:30616"/>
        <note>ligand shared between two neighboring subunits</note>
    </ligand>
</feature>
<feature type="binding site" evidence="1">
    <location>
        <position position="239"/>
    </location>
    <ligand>
        <name>ATP</name>
        <dbReference type="ChEBI" id="CHEBI:30616"/>
        <note>ligand shared between two neighboring subunits</note>
    </ligand>
</feature>
<feature type="binding site" evidence="1">
    <location>
        <position position="239"/>
    </location>
    <ligand>
        <name>L-methionine</name>
        <dbReference type="ChEBI" id="CHEBI:57844"/>
        <note>ligand shared between two neighboring subunits</note>
    </ligand>
</feature>
<feature type="binding site" description="in other chain" evidence="1">
    <location>
        <begin position="245"/>
        <end position="246"/>
    </location>
    <ligand>
        <name>ATP</name>
        <dbReference type="ChEBI" id="CHEBI:30616"/>
        <note>ligand shared between two neighboring subunits</note>
    </ligand>
</feature>
<feature type="binding site" evidence="1">
    <location>
        <position position="262"/>
    </location>
    <ligand>
        <name>ATP</name>
        <dbReference type="ChEBI" id="CHEBI:30616"/>
        <note>ligand shared between two neighboring subunits</note>
    </ligand>
</feature>
<feature type="binding site" evidence="1">
    <location>
        <position position="266"/>
    </location>
    <ligand>
        <name>ATP</name>
        <dbReference type="ChEBI" id="CHEBI:30616"/>
        <note>ligand shared between two neighboring subunits</note>
    </ligand>
</feature>
<feature type="binding site" description="in other chain" evidence="1">
    <location>
        <position position="270"/>
    </location>
    <ligand>
        <name>L-methionine</name>
        <dbReference type="ChEBI" id="CHEBI:57844"/>
        <note>ligand shared between two neighboring subunits</note>
    </ligand>
</feature>
<accession>A9MRD1</accession>
<sequence>MAKHLFTSESVSEGHPDKIADQISDAVLDAILQQDPKARVACETYVKTGMVLVGGEITTSAWVDIEEITRNTVREIGYVHSDMGFDANSCAVLSAIGKQSPDINQGVDRADPLEQGAGDQGLMFGYATNETDVLMPAPITYAHRLVQRQAEVRKNGTLPWLRPDAKSQVTFQYDDGKIVGIDAVVLSTQHAEDIDQKSLQEAVMEEIIKPILPSEWLNTSTKFFINPTGRFVIGGPMGDCGLTGRKIIVDTYGGMARHGGGAFSGKDPSKVDRSAAYAARYVAKNIVAAGLADRCEIQVSYAIGVAEPTSIMVETFGTEKVSSEQLTLLVREFFDLRPYGLIQMLDLLHPIYKETAAYGHFGRENFPWEKTDKAQLLRDAAGLK</sequence>
<evidence type="ECO:0000255" key="1">
    <source>
        <dbReference type="HAMAP-Rule" id="MF_00086"/>
    </source>
</evidence>
<gene>
    <name evidence="1" type="primary">metK</name>
    <name type="ordered locus">SARI_04556</name>
</gene>
<keyword id="KW-0067">ATP-binding</keyword>
<keyword id="KW-0963">Cytoplasm</keyword>
<keyword id="KW-0460">Magnesium</keyword>
<keyword id="KW-0479">Metal-binding</keyword>
<keyword id="KW-0547">Nucleotide-binding</keyword>
<keyword id="KW-0554">One-carbon metabolism</keyword>
<keyword id="KW-0630">Potassium</keyword>
<keyword id="KW-1185">Reference proteome</keyword>
<keyword id="KW-0808">Transferase</keyword>
<organism>
    <name type="scientific">Salmonella arizonae (strain ATCC BAA-731 / CDC346-86 / RSK2980)</name>
    <dbReference type="NCBI Taxonomy" id="41514"/>
    <lineage>
        <taxon>Bacteria</taxon>
        <taxon>Pseudomonadati</taxon>
        <taxon>Pseudomonadota</taxon>
        <taxon>Gammaproteobacteria</taxon>
        <taxon>Enterobacterales</taxon>
        <taxon>Enterobacteriaceae</taxon>
        <taxon>Salmonella</taxon>
    </lineage>
</organism>
<comment type="function">
    <text evidence="1">Catalyzes the formation of S-adenosylmethionine (AdoMet) from methionine and ATP. The overall synthetic reaction is composed of two sequential steps, AdoMet formation and the subsequent tripolyphosphate hydrolysis which occurs prior to release of AdoMet from the enzyme.</text>
</comment>
<comment type="catalytic activity">
    <reaction evidence="1">
        <text>L-methionine + ATP + H2O = S-adenosyl-L-methionine + phosphate + diphosphate</text>
        <dbReference type="Rhea" id="RHEA:21080"/>
        <dbReference type="ChEBI" id="CHEBI:15377"/>
        <dbReference type="ChEBI" id="CHEBI:30616"/>
        <dbReference type="ChEBI" id="CHEBI:33019"/>
        <dbReference type="ChEBI" id="CHEBI:43474"/>
        <dbReference type="ChEBI" id="CHEBI:57844"/>
        <dbReference type="ChEBI" id="CHEBI:59789"/>
        <dbReference type="EC" id="2.5.1.6"/>
    </reaction>
</comment>
<comment type="cofactor">
    <cofactor evidence="1">
        <name>Mg(2+)</name>
        <dbReference type="ChEBI" id="CHEBI:18420"/>
    </cofactor>
    <text evidence="1">Binds 2 divalent ions per subunit.</text>
</comment>
<comment type="cofactor">
    <cofactor evidence="1">
        <name>K(+)</name>
        <dbReference type="ChEBI" id="CHEBI:29103"/>
    </cofactor>
    <text evidence="1">Binds 1 potassium ion per subunit.</text>
</comment>
<comment type="pathway">
    <text evidence="1">Amino-acid biosynthesis; S-adenosyl-L-methionine biosynthesis; S-adenosyl-L-methionine from L-methionine: step 1/1.</text>
</comment>
<comment type="subunit">
    <text evidence="1">Homotetramer; dimer of dimers.</text>
</comment>
<comment type="subcellular location">
    <subcellularLocation>
        <location evidence="1">Cytoplasm</location>
    </subcellularLocation>
</comment>
<comment type="similarity">
    <text evidence="1">Belongs to the AdoMet synthase family.</text>
</comment>
<dbReference type="EC" id="2.5.1.6" evidence="1"/>
<dbReference type="EMBL" id="CP000880">
    <property type="protein sequence ID" value="ABX24329.1"/>
    <property type="molecule type" value="Genomic_DNA"/>
</dbReference>
<dbReference type="SMR" id="A9MRD1"/>
<dbReference type="STRING" id="41514.SARI_04556"/>
<dbReference type="KEGG" id="ses:SARI_04556"/>
<dbReference type="HOGENOM" id="CLU_041802_1_1_6"/>
<dbReference type="UniPathway" id="UPA00315">
    <property type="reaction ID" value="UER00080"/>
</dbReference>
<dbReference type="Proteomes" id="UP000002084">
    <property type="component" value="Chromosome"/>
</dbReference>
<dbReference type="GO" id="GO:0005737">
    <property type="term" value="C:cytoplasm"/>
    <property type="evidence" value="ECO:0007669"/>
    <property type="project" value="UniProtKB-SubCell"/>
</dbReference>
<dbReference type="GO" id="GO:0005524">
    <property type="term" value="F:ATP binding"/>
    <property type="evidence" value="ECO:0007669"/>
    <property type="project" value="UniProtKB-UniRule"/>
</dbReference>
<dbReference type="GO" id="GO:0000287">
    <property type="term" value="F:magnesium ion binding"/>
    <property type="evidence" value="ECO:0007669"/>
    <property type="project" value="UniProtKB-UniRule"/>
</dbReference>
<dbReference type="GO" id="GO:0004478">
    <property type="term" value="F:methionine adenosyltransferase activity"/>
    <property type="evidence" value="ECO:0007669"/>
    <property type="project" value="UniProtKB-UniRule"/>
</dbReference>
<dbReference type="GO" id="GO:0006730">
    <property type="term" value="P:one-carbon metabolic process"/>
    <property type="evidence" value="ECO:0007669"/>
    <property type="project" value="UniProtKB-KW"/>
</dbReference>
<dbReference type="GO" id="GO:0006556">
    <property type="term" value="P:S-adenosylmethionine biosynthetic process"/>
    <property type="evidence" value="ECO:0007669"/>
    <property type="project" value="UniProtKB-UniRule"/>
</dbReference>
<dbReference type="CDD" id="cd18079">
    <property type="entry name" value="S-AdoMet_synt"/>
    <property type="match status" value="1"/>
</dbReference>
<dbReference type="FunFam" id="3.30.300.10:FF:000001">
    <property type="entry name" value="S-adenosylmethionine synthase"/>
    <property type="match status" value="1"/>
</dbReference>
<dbReference type="FunFam" id="3.30.300.10:FF:000003">
    <property type="entry name" value="S-adenosylmethionine synthase"/>
    <property type="match status" value="1"/>
</dbReference>
<dbReference type="Gene3D" id="3.30.300.10">
    <property type="match status" value="3"/>
</dbReference>
<dbReference type="HAMAP" id="MF_00086">
    <property type="entry name" value="S_AdoMet_synth1"/>
    <property type="match status" value="1"/>
</dbReference>
<dbReference type="InterPro" id="IPR022631">
    <property type="entry name" value="ADOMET_SYNTHASE_CS"/>
</dbReference>
<dbReference type="InterPro" id="IPR022630">
    <property type="entry name" value="S-AdoMet_synt_C"/>
</dbReference>
<dbReference type="InterPro" id="IPR022629">
    <property type="entry name" value="S-AdoMet_synt_central"/>
</dbReference>
<dbReference type="InterPro" id="IPR022628">
    <property type="entry name" value="S-AdoMet_synt_N"/>
</dbReference>
<dbReference type="InterPro" id="IPR002133">
    <property type="entry name" value="S-AdoMet_synthetase"/>
</dbReference>
<dbReference type="InterPro" id="IPR022636">
    <property type="entry name" value="S-AdoMet_synthetase_sfam"/>
</dbReference>
<dbReference type="NCBIfam" id="TIGR01034">
    <property type="entry name" value="metK"/>
    <property type="match status" value="1"/>
</dbReference>
<dbReference type="PANTHER" id="PTHR11964">
    <property type="entry name" value="S-ADENOSYLMETHIONINE SYNTHETASE"/>
    <property type="match status" value="1"/>
</dbReference>
<dbReference type="Pfam" id="PF02773">
    <property type="entry name" value="S-AdoMet_synt_C"/>
    <property type="match status" value="1"/>
</dbReference>
<dbReference type="Pfam" id="PF02772">
    <property type="entry name" value="S-AdoMet_synt_M"/>
    <property type="match status" value="1"/>
</dbReference>
<dbReference type="Pfam" id="PF00438">
    <property type="entry name" value="S-AdoMet_synt_N"/>
    <property type="match status" value="1"/>
</dbReference>
<dbReference type="PIRSF" id="PIRSF000497">
    <property type="entry name" value="MAT"/>
    <property type="match status" value="1"/>
</dbReference>
<dbReference type="SUPFAM" id="SSF55973">
    <property type="entry name" value="S-adenosylmethionine synthetase"/>
    <property type="match status" value="3"/>
</dbReference>
<dbReference type="PROSITE" id="PS00376">
    <property type="entry name" value="ADOMET_SYNTHASE_1"/>
    <property type="match status" value="1"/>
</dbReference>
<dbReference type="PROSITE" id="PS00377">
    <property type="entry name" value="ADOMET_SYNTHASE_2"/>
    <property type="match status" value="1"/>
</dbReference>